<name>KDM6B_MOUSE</name>
<gene>
    <name type="primary">Kdm6b</name>
    <name type="synonym">Jmjd3</name>
    <name type="synonym">Kiaa0346</name>
</gene>
<dbReference type="EC" id="1.14.11.68" evidence="3"/>
<dbReference type="EMBL" id="AL596125">
    <property type="status" value="NOT_ANNOTATED_CDS"/>
    <property type="molecule type" value="Genomic_DNA"/>
</dbReference>
<dbReference type="EMBL" id="BC075632">
    <property type="protein sequence ID" value="AAH75632.1"/>
    <property type="molecule type" value="mRNA"/>
</dbReference>
<dbReference type="EMBL" id="AK129121">
    <property type="protein sequence ID" value="BAC97931.1"/>
    <property type="molecule type" value="mRNA"/>
</dbReference>
<dbReference type="EMBL" id="AK136019">
    <property type="protein sequence ID" value="BAE22775.1"/>
    <property type="status" value="ALT_INIT"/>
    <property type="molecule type" value="mRNA"/>
</dbReference>
<dbReference type="CCDS" id="CCDS24895.1"/>
<dbReference type="RefSeq" id="NP_001017426.1">
    <property type="nucleotide sequence ID" value="NM_001017426.2"/>
</dbReference>
<dbReference type="RefSeq" id="XP_006532961.1">
    <property type="nucleotide sequence ID" value="XM_006532898.1"/>
</dbReference>
<dbReference type="RefSeq" id="XP_011247221.1">
    <property type="nucleotide sequence ID" value="XM_011248919.2"/>
</dbReference>
<dbReference type="RefSeq" id="XP_011247222.1">
    <property type="nucleotide sequence ID" value="XM_011248920.2"/>
</dbReference>
<dbReference type="RefSeq" id="XP_011247223.1">
    <property type="nucleotide sequence ID" value="XM_011248921.1"/>
</dbReference>
<dbReference type="RefSeq" id="XP_011247224.1">
    <property type="nucleotide sequence ID" value="XM_011248922.2"/>
</dbReference>
<dbReference type="RefSeq" id="XP_011247225.1">
    <property type="nucleotide sequence ID" value="XM_011248923.1"/>
</dbReference>
<dbReference type="PDB" id="4EYU">
    <property type="method" value="X-ray"/>
    <property type="resolution" value="2.30 A"/>
    <property type="chains" value="A/B=1155-1293, A/B=1321-1641"/>
</dbReference>
<dbReference type="PDB" id="4EZ4">
    <property type="method" value="X-ray"/>
    <property type="resolution" value="2.99 A"/>
    <property type="chains" value="A/B=1155-1293, A/B=1321-1641"/>
</dbReference>
<dbReference type="PDB" id="4EZH">
    <property type="method" value="X-ray"/>
    <property type="resolution" value="2.52 A"/>
    <property type="chains" value="A/B=1155-1293, A/B=1321-1641"/>
</dbReference>
<dbReference type="PDBsum" id="4EYU"/>
<dbReference type="PDBsum" id="4EZ4"/>
<dbReference type="PDBsum" id="4EZH"/>
<dbReference type="SMR" id="Q5NCY0"/>
<dbReference type="BioGRID" id="229803">
    <property type="interactions" value="10"/>
</dbReference>
<dbReference type="CORUM" id="Q5NCY0"/>
<dbReference type="DIP" id="DIP-39160N"/>
<dbReference type="FunCoup" id="Q5NCY0">
    <property type="interactions" value="1131"/>
</dbReference>
<dbReference type="IntAct" id="Q5NCY0">
    <property type="interactions" value="5"/>
</dbReference>
<dbReference type="STRING" id="10090.ENSMUSP00000091620"/>
<dbReference type="GlyGen" id="Q5NCY0">
    <property type="glycosylation" value="6 sites, 1 O-linked glycan (1 site)"/>
</dbReference>
<dbReference type="iPTMnet" id="Q5NCY0"/>
<dbReference type="PhosphoSitePlus" id="Q5NCY0"/>
<dbReference type="PaxDb" id="10090-ENSMUSP00000091620"/>
<dbReference type="PeptideAtlas" id="Q5NCY0"/>
<dbReference type="ProteomicsDB" id="263525"/>
<dbReference type="Antibodypedia" id="24405">
    <property type="antibodies" value="362 antibodies from 34 providers"/>
</dbReference>
<dbReference type="DNASU" id="216850"/>
<dbReference type="Ensembl" id="ENSMUST00000094077.5">
    <property type="protein sequence ID" value="ENSMUSP00000091620.5"/>
    <property type="gene ID" value="ENSMUSG00000018476.8"/>
</dbReference>
<dbReference type="GeneID" id="216850"/>
<dbReference type="KEGG" id="mmu:216850"/>
<dbReference type="UCSC" id="uc007jqd.1">
    <property type="organism name" value="mouse"/>
</dbReference>
<dbReference type="AGR" id="MGI:2448492"/>
<dbReference type="CTD" id="23135"/>
<dbReference type="MGI" id="MGI:2448492">
    <property type="gene designation" value="Kdm6b"/>
</dbReference>
<dbReference type="VEuPathDB" id="HostDB:ENSMUSG00000018476"/>
<dbReference type="eggNOG" id="KOG1124">
    <property type="taxonomic scope" value="Eukaryota"/>
</dbReference>
<dbReference type="eggNOG" id="KOG1246">
    <property type="taxonomic scope" value="Eukaryota"/>
</dbReference>
<dbReference type="GeneTree" id="ENSGT00940000160414"/>
<dbReference type="HOGENOM" id="CLU_001909_0_0_1"/>
<dbReference type="InParanoid" id="Q5NCY0"/>
<dbReference type="OMA" id="LHGDVWG"/>
<dbReference type="OrthoDB" id="418911at2759"/>
<dbReference type="PhylomeDB" id="Q5NCY0"/>
<dbReference type="TreeFam" id="TF317405"/>
<dbReference type="BRENDA" id="1.14.11.68">
    <property type="organism ID" value="3474"/>
</dbReference>
<dbReference type="Reactome" id="R-MMU-2559580">
    <property type="pathway name" value="Oxidative Stress Induced Senescence"/>
</dbReference>
<dbReference type="Reactome" id="R-MMU-3214842">
    <property type="pathway name" value="HDMs demethylate histones"/>
</dbReference>
<dbReference type="BioGRID-ORCS" id="216850">
    <property type="hits" value="4 hits in 82 CRISPR screens"/>
</dbReference>
<dbReference type="ChiTaRS" id="Kdm6b">
    <property type="organism name" value="mouse"/>
</dbReference>
<dbReference type="EvolutionaryTrace" id="Q5NCY0"/>
<dbReference type="PRO" id="PR:Q5NCY0"/>
<dbReference type="Proteomes" id="UP000000589">
    <property type="component" value="Chromosome 11"/>
</dbReference>
<dbReference type="RNAct" id="Q5NCY0">
    <property type="molecule type" value="protein"/>
</dbReference>
<dbReference type="Bgee" id="ENSMUSG00000018476">
    <property type="expression patterns" value="Expressed in internal carotid artery and 225 other cell types or tissues"/>
</dbReference>
<dbReference type="GO" id="GO:0005654">
    <property type="term" value="C:nucleoplasm"/>
    <property type="evidence" value="ECO:0000304"/>
    <property type="project" value="Reactome"/>
</dbReference>
<dbReference type="GO" id="GO:0005634">
    <property type="term" value="C:nucleus"/>
    <property type="evidence" value="ECO:0000314"/>
    <property type="project" value="BHF-UCL"/>
</dbReference>
<dbReference type="GO" id="GO:0008013">
    <property type="term" value="F:beta-catenin binding"/>
    <property type="evidence" value="ECO:0000353"/>
    <property type="project" value="BHF-UCL"/>
</dbReference>
<dbReference type="GO" id="GO:0003682">
    <property type="term" value="F:chromatin binding"/>
    <property type="evidence" value="ECO:0007669"/>
    <property type="project" value="Ensembl"/>
</dbReference>
<dbReference type="GO" id="GO:0071558">
    <property type="term" value="F:histone H3K27me2/H3K27me3 demethylase activity"/>
    <property type="evidence" value="ECO:0000314"/>
    <property type="project" value="BHF-UCL"/>
</dbReference>
<dbReference type="GO" id="GO:0046872">
    <property type="term" value="F:metal ion binding"/>
    <property type="evidence" value="ECO:0007669"/>
    <property type="project" value="UniProtKB-KW"/>
</dbReference>
<dbReference type="GO" id="GO:0043565">
    <property type="term" value="F:sequence-specific DNA binding"/>
    <property type="evidence" value="ECO:0000314"/>
    <property type="project" value="MGI"/>
</dbReference>
<dbReference type="GO" id="GO:0055007">
    <property type="term" value="P:cardiac muscle cell differentiation"/>
    <property type="evidence" value="ECO:0000315"/>
    <property type="project" value="BHF-UCL"/>
</dbReference>
<dbReference type="GO" id="GO:0045165">
    <property type="term" value="P:cell fate commitment"/>
    <property type="evidence" value="ECO:0000315"/>
    <property type="project" value="MGI"/>
</dbReference>
<dbReference type="GO" id="GO:0070301">
    <property type="term" value="P:cellular response to hydrogen peroxide"/>
    <property type="evidence" value="ECO:0000314"/>
    <property type="project" value="MGI"/>
</dbReference>
<dbReference type="GO" id="GO:0006338">
    <property type="term" value="P:chromatin remodeling"/>
    <property type="evidence" value="ECO:0000315"/>
    <property type="project" value="UniProtKB"/>
</dbReference>
<dbReference type="GO" id="GO:0045446">
    <property type="term" value="P:endothelial cell differentiation"/>
    <property type="evidence" value="ECO:0000315"/>
    <property type="project" value="BHF-UCL"/>
</dbReference>
<dbReference type="GO" id="GO:0021766">
    <property type="term" value="P:hippocampus development"/>
    <property type="evidence" value="ECO:0007669"/>
    <property type="project" value="Ensembl"/>
</dbReference>
<dbReference type="GO" id="GO:0002437">
    <property type="term" value="P:inflammatory response to antigenic stimulus"/>
    <property type="evidence" value="ECO:0007669"/>
    <property type="project" value="Ensembl"/>
</dbReference>
<dbReference type="GO" id="GO:0048333">
    <property type="term" value="P:mesodermal cell differentiation"/>
    <property type="evidence" value="ECO:0000315"/>
    <property type="project" value="BHF-UCL"/>
</dbReference>
<dbReference type="GO" id="GO:0120162">
    <property type="term" value="P:positive regulation of cold-induced thermogenesis"/>
    <property type="evidence" value="ECO:0000315"/>
    <property type="project" value="YuBioLab"/>
</dbReference>
<dbReference type="GO" id="GO:0045944">
    <property type="term" value="P:positive regulation of transcription by RNA polymerase II"/>
    <property type="evidence" value="ECO:0000314"/>
    <property type="project" value="MGI"/>
</dbReference>
<dbReference type="GO" id="GO:0010468">
    <property type="term" value="P:regulation of gene expression"/>
    <property type="evidence" value="ECO:0000315"/>
    <property type="project" value="MGI"/>
</dbReference>
<dbReference type="GO" id="GO:0014823">
    <property type="term" value="P:response to activity"/>
    <property type="evidence" value="ECO:0007669"/>
    <property type="project" value="Ensembl"/>
</dbReference>
<dbReference type="GO" id="GO:0060992">
    <property type="term" value="P:response to fungicide"/>
    <property type="evidence" value="ECO:0007669"/>
    <property type="project" value="Ensembl"/>
</dbReference>
<dbReference type="FunFam" id="1.20.58.1370:FF:000001">
    <property type="entry name" value="lysine-specific demethylase 6A isoform X2"/>
    <property type="match status" value="1"/>
</dbReference>
<dbReference type="FunFam" id="2.10.110.20:FF:000001">
    <property type="entry name" value="lysine-specific demethylase 6A isoform X2"/>
    <property type="match status" value="1"/>
</dbReference>
<dbReference type="FunFam" id="2.60.120.650:FF:000009">
    <property type="entry name" value="Putative lysine-specific demethylase 6B"/>
    <property type="match status" value="1"/>
</dbReference>
<dbReference type="Gene3D" id="1.20.58.1370">
    <property type="match status" value="1"/>
</dbReference>
<dbReference type="Gene3D" id="2.10.110.20">
    <property type="match status" value="1"/>
</dbReference>
<dbReference type="Gene3D" id="2.60.120.650">
    <property type="entry name" value="Cupin"/>
    <property type="match status" value="1"/>
</dbReference>
<dbReference type="InterPro" id="IPR051630">
    <property type="entry name" value="Corepressor-Demethylase"/>
</dbReference>
<dbReference type="InterPro" id="IPR003347">
    <property type="entry name" value="JmjC_dom"/>
</dbReference>
<dbReference type="InterPro" id="IPR046941">
    <property type="entry name" value="KDM6_GATAL_sf"/>
</dbReference>
<dbReference type="InterPro" id="IPR048562">
    <property type="entry name" value="KDM6A_B-like_C-hel"/>
</dbReference>
<dbReference type="InterPro" id="IPR048560">
    <property type="entry name" value="KDM6A_B-like_GATAL"/>
</dbReference>
<dbReference type="PANTHER" id="PTHR14017">
    <property type="entry name" value="LYSINE-SPECIFIC DEMETHYLASE"/>
    <property type="match status" value="1"/>
</dbReference>
<dbReference type="PANTHER" id="PTHR14017:SF5">
    <property type="entry name" value="LYSINE-SPECIFIC DEMETHYLASE 6B"/>
    <property type="match status" value="1"/>
</dbReference>
<dbReference type="Pfam" id="PF02373">
    <property type="entry name" value="JmjC"/>
    <property type="match status" value="1"/>
</dbReference>
<dbReference type="Pfam" id="PF21322">
    <property type="entry name" value="KDM6_C-hel"/>
    <property type="match status" value="1"/>
</dbReference>
<dbReference type="Pfam" id="PF21326">
    <property type="entry name" value="KDM6_GATAL"/>
    <property type="match status" value="1"/>
</dbReference>
<dbReference type="SMART" id="SM00558">
    <property type="entry name" value="JmjC"/>
    <property type="match status" value="1"/>
</dbReference>
<dbReference type="SUPFAM" id="SSF51197">
    <property type="entry name" value="Clavaminate synthase-like"/>
    <property type="match status" value="1"/>
</dbReference>
<dbReference type="PROSITE" id="PS51184">
    <property type="entry name" value="JMJC"/>
    <property type="match status" value="1"/>
</dbReference>
<keyword id="KW-0002">3D-structure</keyword>
<keyword id="KW-0156">Chromatin regulator</keyword>
<keyword id="KW-0223">Dioxygenase</keyword>
<keyword id="KW-0395">Inflammatory response</keyword>
<keyword id="KW-0408">Iron</keyword>
<keyword id="KW-1017">Isopeptide bond</keyword>
<keyword id="KW-0479">Metal-binding</keyword>
<keyword id="KW-0539">Nucleus</keyword>
<keyword id="KW-0560">Oxidoreductase</keyword>
<keyword id="KW-0597">Phosphoprotein</keyword>
<keyword id="KW-1185">Reference proteome</keyword>
<keyword id="KW-0832">Ubl conjugation</keyword>
<keyword id="KW-0862">Zinc</keyword>
<protein>
    <recommendedName>
        <fullName>Lysine-specific demethylase 6B</fullName>
        <ecNumber evidence="3">1.14.11.68</ecNumber>
    </recommendedName>
    <alternativeName>
        <fullName>JmjC domain-containing protein 3</fullName>
    </alternativeName>
    <alternativeName>
        <fullName>Jumonji domain-containing protein 3</fullName>
    </alternativeName>
    <alternativeName>
        <fullName evidence="9">[histone H3]-trimethyl-L-lysine(27) demethylase 6B</fullName>
    </alternativeName>
</protein>
<comment type="function">
    <text evidence="6 7">Histone demethylase that specifically demethylates 'Lys-27' of histone H3, thereby playing a central role in histone code. Demethylates trimethylated and dimethylated H3 'Lys-27'. Plays a central role in regulation of posterior development, by regulating HOX gene expression. Involved in inflammatory response by participating in macrophage differentiation in case of inflammation by regulating gene expression and macrophage differentiation (PubMed:17825402). Plays a demethylase-independent role in chromatin remodeling to regulate T-box family member-dependent gene expression by acting as a link between T-box factors and the SMARCA4-containing SWI/SNF remodeling complex (PubMed:21095589).</text>
</comment>
<comment type="catalytic activity">
    <reaction evidence="3">
        <text>N(6),N(6),N(6)-trimethyl-L-lysyl(27)-[histone H3] + 2 2-oxoglutarate + 2 O2 = N(6)-methyl-L-lysyl(27)-[histone H3] + 2 formaldehyde + 2 succinate + 2 CO2</text>
        <dbReference type="Rhea" id="RHEA:60224"/>
        <dbReference type="Rhea" id="RHEA-COMP:15535"/>
        <dbReference type="Rhea" id="RHEA-COMP:15544"/>
        <dbReference type="ChEBI" id="CHEBI:15379"/>
        <dbReference type="ChEBI" id="CHEBI:16526"/>
        <dbReference type="ChEBI" id="CHEBI:16810"/>
        <dbReference type="ChEBI" id="CHEBI:16842"/>
        <dbReference type="ChEBI" id="CHEBI:30031"/>
        <dbReference type="ChEBI" id="CHEBI:61929"/>
        <dbReference type="ChEBI" id="CHEBI:61961"/>
        <dbReference type="EC" id="1.14.11.68"/>
    </reaction>
</comment>
<comment type="cofactor">
    <cofactor evidence="1">
        <name>L-ascorbate</name>
        <dbReference type="ChEBI" id="CHEBI:38290"/>
    </cofactor>
</comment>
<comment type="cofactor">
    <cofactor evidence="1">
        <name>Fe(2+)</name>
        <dbReference type="ChEBI" id="CHEBI:29033"/>
    </cofactor>
</comment>
<comment type="subunit">
    <text evidence="3 7 8">Interacts with TLE1 (PubMed:21095589). Component of the MLL4 complex, at least composed of KMT2B/MLL4, ASH2L, RBBP5, WDR5, and KDM6B (By similarity). Interacts with TBX21, SMARCA4, SMARCC1 and SMARCC2 (PubMed:21095589).</text>
</comment>
<comment type="subcellular location">
    <subcellularLocation>
        <location evidence="1">Nucleus</location>
    </subcellularLocation>
</comment>
<comment type="induction">
    <text evidence="6">By inflammatory stimuli; mediated by NF-kappa-B.</text>
</comment>
<comment type="similarity">
    <text evidence="9">Belongs to the UTX family.</text>
</comment>
<comment type="sequence caution" evidence="9">
    <conflict type="erroneous initiation">
        <sequence resource="EMBL-CDS" id="BAE22775"/>
    </conflict>
</comment>
<organism>
    <name type="scientific">Mus musculus</name>
    <name type="common">Mouse</name>
    <dbReference type="NCBI Taxonomy" id="10090"/>
    <lineage>
        <taxon>Eukaryota</taxon>
        <taxon>Metazoa</taxon>
        <taxon>Chordata</taxon>
        <taxon>Craniata</taxon>
        <taxon>Vertebrata</taxon>
        <taxon>Euteleostomi</taxon>
        <taxon>Mammalia</taxon>
        <taxon>Eutheria</taxon>
        <taxon>Euarchontoglires</taxon>
        <taxon>Glires</taxon>
        <taxon>Rodentia</taxon>
        <taxon>Myomorpha</taxon>
        <taxon>Muroidea</taxon>
        <taxon>Muridae</taxon>
        <taxon>Murinae</taxon>
        <taxon>Mus</taxon>
        <taxon>Mus</taxon>
    </lineage>
</organism>
<reference key="1">
    <citation type="journal article" date="2009" name="PLoS Biol.">
        <title>Lineage-specific biology revealed by a finished genome assembly of the mouse.</title>
        <authorList>
            <person name="Church D.M."/>
            <person name="Goodstadt L."/>
            <person name="Hillier L.W."/>
            <person name="Zody M.C."/>
            <person name="Goldstein S."/>
            <person name="She X."/>
            <person name="Bult C.J."/>
            <person name="Agarwala R."/>
            <person name="Cherry J.L."/>
            <person name="DiCuccio M."/>
            <person name="Hlavina W."/>
            <person name="Kapustin Y."/>
            <person name="Meric P."/>
            <person name="Maglott D."/>
            <person name="Birtle Z."/>
            <person name="Marques A.C."/>
            <person name="Graves T."/>
            <person name="Zhou S."/>
            <person name="Teague B."/>
            <person name="Potamousis K."/>
            <person name="Churas C."/>
            <person name="Place M."/>
            <person name="Herschleb J."/>
            <person name="Runnheim R."/>
            <person name="Forrest D."/>
            <person name="Amos-Landgraf J."/>
            <person name="Schwartz D.C."/>
            <person name="Cheng Z."/>
            <person name="Lindblad-Toh K."/>
            <person name="Eichler E.E."/>
            <person name="Ponting C.P."/>
        </authorList>
    </citation>
    <scope>NUCLEOTIDE SEQUENCE [LARGE SCALE GENOMIC DNA]</scope>
    <source>
        <strain>C57BL/6J</strain>
    </source>
</reference>
<reference key="2">
    <citation type="journal article" date="2004" name="Genome Res.">
        <title>The status, quality, and expansion of the NIH full-length cDNA project: the Mammalian Gene Collection (MGC).</title>
        <authorList>
            <consortium name="The MGC Project Team"/>
        </authorList>
    </citation>
    <scope>NUCLEOTIDE SEQUENCE [LARGE SCALE MRNA]</scope>
    <source>
        <strain>C57BL/6J</strain>
        <tissue>Brain</tissue>
    </source>
</reference>
<reference key="3">
    <citation type="journal article" date="2003" name="DNA Res.">
        <title>Prediction of the coding sequences of mouse homologues of KIAA gene: III. The complete nucleotide sequences of 500 mouse KIAA-homologous cDNAs identified by screening of terminal sequences of cDNA clones randomly sampled from size-fractionated libraries.</title>
        <authorList>
            <person name="Okazaki N."/>
            <person name="Kikuno R."/>
            <person name="Ohara R."/>
            <person name="Inamoto S."/>
            <person name="Koseki H."/>
            <person name="Hiraoka S."/>
            <person name="Saga Y."/>
            <person name="Nagase T."/>
            <person name="Ohara O."/>
            <person name="Koga H."/>
        </authorList>
    </citation>
    <scope>NUCLEOTIDE SEQUENCE [LARGE SCALE MRNA] OF 935-1641</scope>
    <source>
        <tissue>Embryonic tail</tissue>
    </source>
</reference>
<reference key="4">
    <citation type="journal article" date="2005" name="Science">
        <title>The transcriptional landscape of the mammalian genome.</title>
        <authorList>
            <person name="Carninci P."/>
            <person name="Kasukawa T."/>
            <person name="Katayama S."/>
            <person name="Gough J."/>
            <person name="Frith M.C."/>
            <person name="Maeda N."/>
            <person name="Oyama R."/>
            <person name="Ravasi T."/>
            <person name="Lenhard B."/>
            <person name="Wells C."/>
            <person name="Kodzius R."/>
            <person name="Shimokawa K."/>
            <person name="Bajic V.B."/>
            <person name="Brenner S.E."/>
            <person name="Batalov S."/>
            <person name="Forrest A.R."/>
            <person name="Zavolan M."/>
            <person name="Davis M.J."/>
            <person name="Wilming L.G."/>
            <person name="Aidinis V."/>
            <person name="Allen J.E."/>
            <person name="Ambesi-Impiombato A."/>
            <person name="Apweiler R."/>
            <person name="Aturaliya R.N."/>
            <person name="Bailey T.L."/>
            <person name="Bansal M."/>
            <person name="Baxter L."/>
            <person name="Beisel K.W."/>
            <person name="Bersano T."/>
            <person name="Bono H."/>
            <person name="Chalk A.M."/>
            <person name="Chiu K.P."/>
            <person name="Choudhary V."/>
            <person name="Christoffels A."/>
            <person name="Clutterbuck D.R."/>
            <person name="Crowe M.L."/>
            <person name="Dalla E."/>
            <person name="Dalrymple B.P."/>
            <person name="de Bono B."/>
            <person name="Della Gatta G."/>
            <person name="di Bernardo D."/>
            <person name="Down T."/>
            <person name="Engstrom P."/>
            <person name="Fagiolini M."/>
            <person name="Faulkner G."/>
            <person name="Fletcher C.F."/>
            <person name="Fukushima T."/>
            <person name="Furuno M."/>
            <person name="Futaki S."/>
            <person name="Gariboldi M."/>
            <person name="Georgii-Hemming P."/>
            <person name="Gingeras T.R."/>
            <person name="Gojobori T."/>
            <person name="Green R.E."/>
            <person name="Gustincich S."/>
            <person name="Harbers M."/>
            <person name="Hayashi Y."/>
            <person name="Hensch T.K."/>
            <person name="Hirokawa N."/>
            <person name="Hill D."/>
            <person name="Huminiecki L."/>
            <person name="Iacono M."/>
            <person name="Ikeo K."/>
            <person name="Iwama A."/>
            <person name="Ishikawa T."/>
            <person name="Jakt M."/>
            <person name="Kanapin A."/>
            <person name="Katoh M."/>
            <person name="Kawasawa Y."/>
            <person name="Kelso J."/>
            <person name="Kitamura H."/>
            <person name="Kitano H."/>
            <person name="Kollias G."/>
            <person name="Krishnan S.P."/>
            <person name="Kruger A."/>
            <person name="Kummerfeld S.K."/>
            <person name="Kurochkin I.V."/>
            <person name="Lareau L.F."/>
            <person name="Lazarevic D."/>
            <person name="Lipovich L."/>
            <person name="Liu J."/>
            <person name="Liuni S."/>
            <person name="McWilliam S."/>
            <person name="Madan Babu M."/>
            <person name="Madera M."/>
            <person name="Marchionni L."/>
            <person name="Matsuda H."/>
            <person name="Matsuzawa S."/>
            <person name="Miki H."/>
            <person name="Mignone F."/>
            <person name="Miyake S."/>
            <person name="Morris K."/>
            <person name="Mottagui-Tabar S."/>
            <person name="Mulder N."/>
            <person name="Nakano N."/>
            <person name="Nakauchi H."/>
            <person name="Ng P."/>
            <person name="Nilsson R."/>
            <person name="Nishiguchi S."/>
            <person name="Nishikawa S."/>
            <person name="Nori F."/>
            <person name="Ohara O."/>
            <person name="Okazaki Y."/>
            <person name="Orlando V."/>
            <person name="Pang K.C."/>
            <person name="Pavan W.J."/>
            <person name="Pavesi G."/>
            <person name="Pesole G."/>
            <person name="Petrovsky N."/>
            <person name="Piazza S."/>
            <person name="Reed J."/>
            <person name="Reid J.F."/>
            <person name="Ring B.Z."/>
            <person name="Ringwald M."/>
            <person name="Rost B."/>
            <person name="Ruan Y."/>
            <person name="Salzberg S.L."/>
            <person name="Sandelin A."/>
            <person name="Schneider C."/>
            <person name="Schoenbach C."/>
            <person name="Sekiguchi K."/>
            <person name="Semple C.A."/>
            <person name="Seno S."/>
            <person name="Sessa L."/>
            <person name="Sheng Y."/>
            <person name="Shibata Y."/>
            <person name="Shimada H."/>
            <person name="Shimada K."/>
            <person name="Silva D."/>
            <person name="Sinclair B."/>
            <person name="Sperling S."/>
            <person name="Stupka E."/>
            <person name="Sugiura K."/>
            <person name="Sultana R."/>
            <person name="Takenaka Y."/>
            <person name="Taki K."/>
            <person name="Tammoja K."/>
            <person name="Tan S.L."/>
            <person name="Tang S."/>
            <person name="Taylor M.S."/>
            <person name="Tegner J."/>
            <person name="Teichmann S.A."/>
            <person name="Ueda H.R."/>
            <person name="van Nimwegen E."/>
            <person name="Verardo R."/>
            <person name="Wei C.L."/>
            <person name="Yagi K."/>
            <person name="Yamanishi H."/>
            <person name="Zabarovsky E."/>
            <person name="Zhu S."/>
            <person name="Zimmer A."/>
            <person name="Hide W."/>
            <person name="Bult C."/>
            <person name="Grimmond S.M."/>
            <person name="Teasdale R.D."/>
            <person name="Liu E.T."/>
            <person name="Brusic V."/>
            <person name="Quackenbush J."/>
            <person name="Wahlestedt C."/>
            <person name="Mattick J.S."/>
            <person name="Hume D.A."/>
            <person name="Kai C."/>
            <person name="Sasaki D."/>
            <person name="Tomaru Y."/>
            <person name="Fukuda S."/>
            <person name="Kanamori-Katayama M."/>
            <person name="Suzuki M."/>
            <person name="Aoki J."/>
            <person name="Arakawa T."/>
            <person name="Iida J."/>
            <person name="Imamura K."/>
            <person name="Itoh M."/>
            <person name="Kato T."/>
            <person name="Kawaji H."/>
            <person name="Kawagashira N."/>
            <person name="Kawashima T."/>
            <person name="Kojima M."/>
            <person name="Kondo S."/>
            <person name="Konno H."/>
            <person name="Nakano K."/>
            <person name="Ninomiya N."/>
            <person name="Nishio T."/>
            <person name="Okada M."/>
            <person name="Plessy C."/>
            <person name="Shibata K."/>
            <person name="Shiraki T."/>
            <person name="Suzuki S."/>
            <person name="Tagami M."/>
            <person name="Waki K."/>
            <person name="Watahiki A."/>
            <person name="Okamura-Oho Y."/>
            <person name="Suzuki H."/>
            <person name="Kawai J."/>
            <person name="Hayashizaki Y."/>
        </authorList>
    </citation>
    <scope>NUCLEOTIDE SEQUENCE [LARGE SCALE MRNA] OF 1138-1641</scope>
    <source>
        <strain>C57BL/6J</strain>
        <tissue>Egg</tissue>
    </source>
</reference>
<reference key="5">
    <citation type="journal article" date="1999" name="Biochem. J.">
        <title>Groucho/transducin-like enhancer of split (TLE) family members interact with the yeast transcriptional co-repressor SSN6 and mammalian SSN6-related proteins: implications for evolutionary conservation of transcription repression mechanisms.</title>
        <authorList>
            <person name="Grbavec D."/>
            <person name="Lo R."/>
            <person name="Liu Y."/>
            <person name="Greenfield A."/>
            <person name="Stifani S."/>
        </authorList>
    </citation>
    <scope>INTERACTION WITH TLE1</scope>
</reference>
<reference key="6">
    <citation type="journal article" date="2007" name="Cell">
        <title>The histone H3 lysine-27 demethylase Jmjd3 links inflammation to inhibition of polycomb-mediated gene silencing.</title>
        <authorList>
            <person name="De Santa F."/>
            <person name="Totaro M.G."/>
            <person name="Prosperini E."/>
            <person name="Notarbartolo S."/>
            <person name="Testa G."/>
            <person name="Natoli G."/>
        </authorList>
    </citation>
    <scope>FUNCTION</scope>
    <scope>INDUCTION</scope>
</reference>
<reference key="7">
    <citation type="journal article" date="2010" name="Mol. Cell">
        <title>Jmjd3 and UTX play a demethylase-independent role in chromatin remodeling to regulate T-box family member-dependent gene expression.</title>
        <authorList>
            <person name="Miller S.A."/>
            <person name="Mohn S.E."/>
            <person name="Weinmann A.S."/>
        </authorList>
    </citation>
    <scope>FUNCTION</scope>
    <scope>INTERACTION WITH TBX21; SMARCA4; SMARCC1 AND SMARCC2</scope>
    <scope>MUTAGENESIS OF HIS-1388; GLU-1390 AND HIS-1468</scope>
</reference>
<feature type="chain" id="PRO_0000292008" description="Lysine-specific demethylase 6B">
    <location>
        <begin position="1"/>
        <end position="1641"/>
    </location>
</feature>
<feature type="domain" description="JmjC" evidence="4">
    <location>
        <begin position="1337"/>
        <end position="1500"/>
    </location>
</feature>
<feature type="region of interest" description="Disordered" evidence="5">
    <location>
        <begin position="42"/>
        <end position="89"/>
    </location>
</feature>
<feature type="region of interest" description="Disordered" evidence="5">
    <location>
        <begin position="188"/>
        <end position="682"/>
    </location>
</feature>
<feature type="region of interest" description="Disordered" evidence="5">
    <location>
        <begin position="704"/>
        <end position="808"/>
    </location>
</feature>
<feature type="region of interest" description="Disordered" evidence="5">
    <location>
        <begin position="824"/>
        <end position="1085"/>
    </location>
</feature>
<feature type="region of interest" description="Disordered" evidence="5">
    <location>
        <begin position="1286"/>
        <end position="1323"/>
    </location>
</feature>
<feature type="compositionally biased region" description="Low complexity" evidence="5">
    <location>
        <begin position="214"/>
        <end position="223"/>
    </location>
</feature>
<feature type="compositionally biased region" description="Pro residues" evidence="5">
    <location>
        <begin position="242"/>
        <end position="268"/>
    </location>
</feature>
<feature type="compositionally biased region" description="Basic and acidic residues" evidence="5">
    <location>
        <begin position="293"/>
        <end position="309"/>
    </location>
</feature>
<feature type="compositionally biased region" description="Low complexity" evidence="5">
    <location>
        <begin position="312"/>
        <end position="326"/>
    </location>
</feature>
<feature type="compositionally biased region" description="Basic and acidic residues" evidence="5">
    <location>
        <begin position="361"/>
        <end position="372"/>
    </location>
</feature>
<feature type="compositionally biased region" description="Low complexity" evidence="5">
    <location>
        <begin position="396"/>
        <end position="415"/>
    </location>
</feature>
<feature type="compositionally biased region" description="Pro residues" evidence="5">
    <location>
        <begin position="467"/>
        <end position="488"/>
    </location>
</feature>
<feature type="compositionally biased region" description="Low complexity" evidence="5">
    <location>
        <begin position="552"/>
        <end position="568"/>
    </location>
</feature>
<feature type="compositionally biased region" description="Pro residues" evidence="5">
    <location>
        <begin position="597"/>
        <end position="613"/>
    </location>
</feature>
<feature type="compositionally biased region" description="Pro residues" evidence="5">
    <location>
        <begin position="645"/>
        <end position="660"/>
    </location>
</feature>
<feature type="compositionally biased region" description="Basic and acidic residues" evidence="5">
    <location>
        <begin position="704"/>
        <end position="713"/>
    </location>
</feature>
<feature type="compositionally biased region" description="Low complexity" evidence="5">
    <location>
        <begin position="743"/>
        <end position="766"/>
    </location>
</feature>
<feature type="compositionally biased region" description="Pro residues" evidence="5">
    <location>
        <begin position="774"/>
        <end position="801"/>
    </location>
</feature>
<feature type="compositionally biased region" description="Low complexity" evidence="5">
    <location>
        <begin position="855"/>
        <end position="879"/>
    </location>
</feature>
<feature type="compositionally biased region" description="Pro residues" evidence="5">
    <location>
        <begin position="891"/>
        <end position="908"/>
    </location>
</feature>
<feature type="compositionally biased region" description="Basic and acidic residues" evidence="5">
    <location>
        <begin position="918"/>
        <end position="931"/>
    </location>
</feature>
<feature type="compositionally biased region" description="Basic residues" evidence="5">
    <location>
        <begin position="974"/>
        <end position="987"/>
    </location>
</feature>
<feature type="compositionally biased region" description="Basic and acidic residues" evidence="5">
    <location>
        <begin position="988"/>
        <end position="1001"/>
    </location>
</feature>
<feature type="compositionally biased region" description="Basic residues" evidence="5">
    <location>
        <begin position="1002"/>
        <end position="1014"/>
    </location>
</feature>
<feature type="compositionally biased region" description="Pro residues" evidence="5">
    <location>
        <begin position="1047"/>
        <end position="1066"/>
    </location>
</feature>
<feature type="compositionally biased region" description="Acidic residues" evidence="5">
    <location>
        <begin position="1294"/>
        <end position="1305"/>
    </location>
</feature>
<feature type="compositionally biased region" description="Low complexity" evidence="5">
    <location>
        <begin position="1306"/>
        <end position="1317"/>
    </location>
</feature>
<feature type="binding site" evidence="1">
    <location>
        <position position="1388"/>
    </location>
    <ligand>
        <name>Fe cation</name>
        <dbReference type="ChEBI" id="CHEBI:24875"/>
    </ligand>
</feature>
<feature type="binding site" evidence="1">
    <location>
        <position position="1390"/>
    </location>
    <ligand>
        <name>Fe cation</name>
        <dbReference type="ChEBI" id="CHEBI:24875"/>
    </ligand>
</feature>
<feature type="binding site" evidence="2">
    <location>
        <position position="1468"/>
    </location>
    <ligand>
        <name>Fe cation</name>
        <dbReference type="ChEBI" id="CHEBI:24875"/>
    </ligand>
</feature>
<feature type="binding site" evidence="2">
    <location>
        <position position="1573"/>
    </location>
    <ligand>
        <name>Zn(2+)</name>
        <dbReference type="ChEBI" id="CHEBI:29105"/>
    </ligand>
</feature>
<feature type="binding site" evidence="2">
    <location>
        <position position="1576"/>
    </location>
    <ligand>
        <name>Zn(2+)</name>
        <dbReference type="ChEBI" id="CHEBI:29105"/>
    </ligand>
</feature>
<feature type="binding site" evidence="2">
    <location>
        <position position="1600"/>
    </location>
    <ligand>
        <name>Zn(2+)</name>
        <dbReference type="ChEBI" id="CHEBI:29105"/>
    </ligand>
</feature>
<feature type="binding site" evidence="2">
    <location>
        <position position="1603"/>
    </location>
    <ligand>
        <name>Zn(2+)</name>
        <dbReference type="ChEBI" id="CHEBI:29105"/>
    </ligand>
</feature>
<feature type="modified residue" description="Phosphoserine" evidence="3">
    <location>
        <position position="224"/>
    </location>
</feature>
<feature type="cross-link" description="Glycyl lysine isopeptide (Lys-Gly) (interchain with G-Cter in SUMO2)" evidence="3">
    <location>
        <position position="1107"/>
    </location>
</feature>
<feature type="mutagenesis site" description="No loss of its ability to regulate TBX21-dependent gene expression or its ability to interact with SMARCA4; when associated with A-1390 and A-1468." evidence="7">
    <original>H</original>
    <variation>A</variation>
    <location>
        <position position="1388"/>
    </location>
</feature>
<feature type="mutagenesis site" description="No loss of its ability to regulate TBX21-dependent gene expression or its ability to interact with SMARCA4; when associated with A-1388 and A-1468." evidence="7">
    <original>E</original>
    <variation>A</variation>
    <location>
        <position position="1390"/>
    </location>
</feature>
<feature type="mutagenesis site" description="No loss of its ability to regulate TBX21-dependent gene expression or its ability to interact with SMARCA4; when associated with A-1388 and A-1390." evidence="7">
    <original>H</original>
    <variation>A</variation>
    <location>
        <position position="1468"/>
    </location>
</feature>
<feature type="sequence conflict" description="In Ref. 2; AAH75632." evidence="9" ref="2">
    <original>P</original>
    <variation>S</variation>
    <location>
        <position position="172"/>
    </location>
</feature>
<feature type="sequence conflict" description="In Ref. 3; BAC97931." evidence="9" ref="3">
    <original>A</original>
    <variation>T</variation>
    <location>
        <position position="965"/>
    </location>
</feature>
<feature type="sequence conflict" description="In Ref. 3; BAC97931." evidence="9" ref="3">
    <original>L</original>
    <variation>LQ</variation>
    <location>
        <position position="1290"/>
    </location>
</feature>
<feature type="helix" evidence="10">
    <location>
        <begin position="1160"/>
        <end position="1162"/>
    </location>
</feature>
<feature type="strand" evidence="10">
    <location>
        <begin position="1170"/>
        <end position="1172"/>
    </location>
</feature>
<feature type="helix" evidence="10">
    <location>
        <begin position="1176"/>
        <end position="1179"/>
    </location>
</feature>
<feature type="strand" evidence="10">
    <location>
        <begin position="1185"/>
        <end position="1187"/>
    </location>
</feature>
<feature type="helix" evidence="10">
    <location>
        <begin position="1191"/>
        <end position="1195"/>
    </location>
</feature>
<feature type="helix" evidence="10">
    <location>
        <begin position="1197"/>
        <end position="1203"/>
    </location>
</feature>
<feature type="strand" evidence="10">
    <location>
        <begin position="1209"/>
        <end position="1214"/>
    </location>
</feature>
<feature type="helix" evidence="10">
    <location>
        <begin position="1216"/>
        <end position="1220"/>
    </location>
</feature>
<feature type="helix" evidence="10">
    <location>
        <begin position="1224"/>
        <end position="1227"/>
    </location>
</feature>
<feature type="helix" evidence="10">
    <location>
        <begin position="1229"/>
        <end position="1236"/>
    </location>
</feature>
<feature type="strand" evidence="10">
    <location>
        <begin position="1240"/>
        <end position="1247"/>
    </location>
</feature>
<feature type="strand" evidence="11">
    <location>
        <begin position="1260"/>
        <end position="1262"/>
    </location>
</feature>
<feature type="strand" evidence="10">
    <location>
        <begin position="1269"/>
        <end position="1274"/>
    </location>
</feature>
<feature type="helix" evidence="10">
    <location>
        <begin position="1275"/>
        <end position="1295"/>
    </location>
</feature>
<feature type="strand" evidence="10">
    <location>
        <begin position="1323"/>
        <end position="1331"/>
    </location>
</feature>
<feature type="turn" evidence="10">
    <location>
        <begin position="1335"/>
        <end position="1338"/>
    </location>
</feature>
<feature type="helix" evidence="10">
    <location>
        <begin position="1339"/>
        <end position="1344"/>
    </location>
</feature>
<feature type="helix" evidence="10">
    <location>
        <begin position="1345"/>
        <end position="1347"/>
    </location>
</feature>
<feature type="helix" evidence="10">
    <location>
        <begin position="1350"/>
        <end position="1352"/>
    </location>
</feature>
<feature type="strand" evidence="10">
    <location>
        <begin position="1353"/>
        <end position="1355"/>
    </location>
</feature>
<feature type="helix" evidence="10">
    <location>
        <begin position="1360"/>
        <end position="1363"/>
    </location>
</feature>
<feature type="strand" evidence="10">
    <location>
        <begin position="1364"/>
        <end position="1366"/>
    </location>
</feature>
<feature type="turn" evidence="10">
    <location>
        <begin position="1369"/>
        <end position="1371"/>
    </location>
</feature>
<feature type="strand" evidence="10">
    <location>
        <begin position="1375"/>
        <end position="1379"/>
    </location>
</feature>
<feature type="strand" evidence="10">
    <location>
        <begin position="1384"/>
        <end position="1388"/>
    </location>
</feature>
<feature type="helix" evidence="10">
    <location>
        <begin position="1391"/>
        <end position="1393"/>
    </location>
</feature>
<feature type="strand" evidence="10">
    <location>
        <begin position="1395"/>
        <end position="1404"/>
    </location>
</feature>
<feature type="strand" evidence="10">
    <location>
        <begin position="1406"/>
        <end position="1411"/>
    </location>
</feature>
<feature type="helix" evidence="10">
    <location>
        <begin position="1413"/>
        <end position="1415"/>
    </location>
</feature>
<feature type="helix" evidence="10">
    <location>
        <begin position="1416"/>
        <end position="1425"/>
    </location>
</feature>
<feature type="turn" evidence="10">
    <location>
        <begin position="1430"/>
        <end position="1432"/>
    </location>
</feature>
<feature type="helix" evidence="10">
    <location>
        <begin position="1439"/>
        <end position="1444"/>
    </location>
</feature>
<feature type="strand" evidence="10">
    <location>
        <begin position="1450"/>
        <end position="1454"/>
    </location>
</feature>
<feature type="strand" evidence="10">
    <location>
        <begin position="1459"/>
        <end position="1462"/>
    </location>
</feature>
<feature type="strand" evidence="10">
    <location>
        <begin position="1467"/>
        <end position="1483"/>
    </location>
</feature>
<feature type="helix" evidence="10">
    <location>
        <begin position="1488"/>
        <end position="1503"/>
    </location>
</feature>
<feature type="helix" evidence="10">
    <location>
        <begin position="1512"/>
        <end position="1522"/>
    </location>
</feature>
<feature type="helix" evidence="10">
    <location>
        <begin position="1528"/>
        <end position="1553"/>
    </location>
</feature>
<feature type="turn" evidence="10">
    <location>
        <begin position="1554"/>
        <end position="1556"/>
    </location>
</feature>
<feature type="strand" evidence="10">
    <location>
        <begin position="1559"/>
        <end position="1561"/>
    </location>
</feature>
<feature type="turn" evidence="10">
    <location>
        <begin position="1574"/>
        <end position="1576"/>
    </location>
</feature>
<feature type="strand" evidence="10">
    <location>
        <begin position="1582"/>
        <end position="1588"/>
    </location>
</feature>
<feature type="strand" evidence="10">
    <location>
        <begin position="1596"/>
        <end position="1599"/>
    </location>
</feature>
<feature type="helix" evidence="10">
    <location>
        <begin position="1601"/>
        <end position="1607"/>
    </location>
</feature>
<feature type="strand" evidence="10">
    <location>
        <begin position="1615"/>
        <end position="1620"/>
    </location>
</feature>
<feature type="helix" evidence="10">
    <location>
        <begin position="1622"/>
        <end position="1631"/>
    </location>
</feature>
<accession>Q5NCY0</accession>
<accession>Q3UWY9</accession>
<accession>Q4VC26</accession>
<accession>Q6ZQD3</accession>
<evidence type="ECO:0000250" key="1"/>
<evidence type="ECO:0000250" key="2">
    <source>
        <dbReference type="UniProtKB" id="O14607"/>
    </source>
</evidence>
<evidence type="ECO:0000250" key="3">
    <source>
        <dbReference type="UniProtKB" id="O15054"/>
    </source>
</evidence>
<evidence type="ECO:0000255" key="4">
    <source>
        <dbReference type="PROSITE-ProRule" id="PRU00538"/>
    </source>
</evidence>
<evidence type="ECO:0000256" key="5">
    <source>
        <dbReference type="SAM" id="MobiDB-lite"/>
    </source>
</evidence>
<evidence type="ECO:0000269" key="6">
    <source>
    </source>
</evidence>
<evidence type="ECO:0000269" key="7">
    <source>
    </source>
</evidence>
<evidence type="ECO:0000269" key="8">
    <source>
    </source>
</evidence>
<evidence type="ECO:0000305" key="9"/>
<evidence type="ECO:0007829" key="10">
    <source>
        <dbReference type="PDB" id="4EYU"/>
    </source>
</evidence>
<evidence type="ECO:0007829" key="11">
    <source>
        <dbReference type="PDB" id="4EZ4"/>
    </source>
</evidence>
<proteinExistence type="evidence at protein level"/>
<sequence>MHRAVDPPGARSAREAFALGGLSCAGAWSSCPPHPPPRSSWLPGGRCSASVGQPPLSAPLPPSHGSSSGHPNKPYYAPGTPTPRPLHGKLESLHGCVQALLREPAQPGLWEQLGQLYESEHDSEEAVCCYHRALRYGGSFAELGPRIGRLQQAQLWNFHAGSCQHRAKVLPPLEQVWNLLHLEHKRNYGAKRGGPPVKRSAEPPVVQPMPPAALSGPSGEEGLSPGGKRRRGCSSEQAGLPPGLPLPPPPPPPPPPPPPPPPPPPPLPGLAISPPFQLTKPGLWNTLHGDAWGPERKGSAPPERQEQRHSMPHSYPYPAPAYSAHPPSHRLVPNTPLGPGPRPPGAESHGCLPATRPPGSDLRESRVQRSRMDSSVSPAASTACVPYAPSRPPGLPGTSSSSSSSSSSNNTGLRGVEPSPGIPGADHYQNPALEISPHQARLGPSAHSSRKPFLTAPAATPHLSLPPGTPSSPPPPCPRLLRPPPPPAWMKGSACRAAREDGEILGELFFGAEGPPRPPPPPLPHRDGFLGPPNPRFSVGTQDSHNPPIPPTTTSSSSSSNSHSSSPTGPVPFPPPSYLARSIDPLPRPSSPTLSPQDPPLPPLTLALPPAPPSSCHQNTSGSFRRSESPRPRVSFPKTPEVGQGPPPGPVSKAPQPVPPGVGELPARGPRLFDFPPTPLEDQFEEPAEFKILPDGLANIMKMLDESIRKEEEQQQQQEAGVAPPPPLKEPFASLQPPFPSDTAPATTTAAPTTATTTTTTTTTTTQEEEKKPPPALPPPPPLAKFPPPPQPQPPPPPPASPASLLKSLASVLEGQKYCYRGTGAAVSTRPGSVPATQYSPSPASGATAPPPTSVAPSAQGSPKPSVSSSSQFSTSGGPWAREHRAGEEPAPGPVTPAQLPPPLPLPPARSESEVLEEISRACETLVERVGRSAINPVDTADPVDSGTEPQPPPAQAKEESGGVAVAAAGPGSGKRRQKEHRRHRRACRDSVGRRPREGRAKAKAKAPKEKSRRVLGNLDLQSEEIQGREKARPDVGGVSKVKTPTAPAPPPAPAPAAQPTPPSAPVPGKKTREEAPGPPGVSRADMLKLRSLSEGPPKELKIRLIKVESGDKETFIASEVEERRLRMADLTISHCAADVMRASKNAKVKGKFRESYLSPAQSVKPKINTEEKLPREKLNPPTPSIYLESKRDAFSPVLLQFCTDPRNPITVIRGLAGSLRLNLGLFSTKTLVEASGEHTVEVRTQVQQPSDENWDLTGTRQIWPCESSRSHTTIAKYAQYQASSFQESLQEERESEDEESEEPDSTTGTSPSSAPDPKNHHIIKFGTNIDLSDAKRWKPQLQELLKLPAFMRVTSTGNMLSHVGHTILGMNTVQLYMKVPGSRTPGHQENNNFCSVNINIGPGDCEWFAVHEHYWETISAFCDRHGVDYLTGSWWPILDDLYASNIPVYRFVQRPGDLVWINAGTVHWVQATGWCNNIAWNVGPLTAYQYQLALERYEWNEVKNVKSIVPMIHVSWNVARTVKISDPDLFKMIKFCLLQSMKHCQVQRESLVRAGKKIAYQGRVKDEPAYYCNECDVEVFNILFVTSENGSRNTYLVHCEGCARRRSAGLQGVVVLEQYRTEELAQAYDAFTLAPASTSR</sequence>